<name>SYE_RHOPS</name>
<sequence length="473" mass="52337">MTRPVVTRFAPSPTGFLHIGGGRTALFNWLYARKHGGKMLLRIEDTDRQRSTQPAIDAILDGLKWLGIEWDGDTVYQFARAARHREVAEQLLAEGKAYRCYATAEELTAMRDKARAEGRSKLYDGSWRDRDPSDAPADLNPTIRLRAPLTGETVIEDQVQGRVVWQNENLDDLVLLRGDGTPTYMLAVVVDDHDMDVTHIIRGDDHLINAARQKQIYDAMGWELPVMAHIPLIHGPDGSKLSKRHGALGVDAYRAMGYLPAALRNYLVRLGWSHGDQELFTTQEMIDAFDLSAIGRSAARFDFAKLESLNGHYIRQTDDQSLVTLLEDLLHYVPQGPAIAARLTDTTRAQLLQAMPGLKERAKTLLELLDNAGFIFADRPLAVDTKGQTVLTPETRALIGRLRAALEDVSPWTAANTEAAMRTFAEQTGLKLGAVAQPLRVALTGRTTSPGIFDVLAVLGREECLSRLADQAA</sequence>
<gene>
    <name evidence="1" type="primary">gltX</name>
    <name type="ordered locus">RPD_2842</name>
</gene>
<feature type="chain" id="PRO_1000001952" description="Glutamate--tRNA ligase">
    <location>
        <begin position="1"/>
        <end position="473"/>
    </location>
</feature>
<feature type="short sequence motif" description="'HIGH' region" evidence="1">
    <location>
        <begin position="11"/>
        <end position="21"/>
    </location>
</feature>
<feature type="short sequence motif" description="'KMSKS' region" evidence="1">
    <location>
        <begin position="240"/>
        <end position="244"/>
    </location>
</feature>
<feature type="binding site" evidence="1">
    <location>
        <position position="243"/>
    </location>
    <ligand>
        <name>ATP</name>
        <dbReference type="ChEBI" id="CHEBI:30616"/>
    </ligand>
</feature>
<evidence type="ECO:0000255" key="1">
    <source>
        <dbReference type="HAMAP-Rule" id="MF_00022"/>
    </source>
</evidence>
<keyword id="KW-0030">Aminoacyl-tRNA synthetase</keyword>
<keyword id="KW-0067">ATP-binding</keyword>
<keyword id="KW-0963">Cytoplasm</keyword>
<keyword id="KW-0436">Ligase</keyword>
<keyword id="KW-0547">Nucleotide-binding</keyword>
<keyword id="KW-0648">Protein biosynthesis</keyword>
<dbReference type="EC" id="6.1.1.17" evidence="1"/>
<dbReference type="EMBL" id="CP000283">
    <property type="protein sequence ID" value="ABE40070.1"/>
    <property type="molecule type" value="Genomic_DNA"/>
</dbReference>
<dbReference type="SMR" id="Q136B9"/>
<dbReference type="STRING" id="316057.RPD_2842"/>
<dbReference type="KEGG" id="rpd:RPD_2842"/>
<dbReference type="eggNOG" id="COG0008">
    <property type="taxonomic scope" value="Bacteria"/>
</dbReference>
<dbReference type="HOGENOM" id="CLU_015768_6_3_5"/>
<dbReference type="BioCyc" id="RPAL316057:RPD_RS14280-MONOMER"/>
<dbReference type="Proteomes" id="UP000001818">
    <property type="component" value="Chromosome"/>
</dbReference>
<dbReference type="GO" id="GO:0005829">
    <property type="term" value="C:cytosol"/>
    <property type="evidence" value="ECO:0007669"/>
    <property type="project" value="TreeGrafter"/>
</dbReference>
<dbReference type="GO" id="GO:0005524">
    <property type="term" value="F:ATP binding"/>
    <property type="evidence" value="ECO:0007669"/>
    <property type="project" value="UniProtKB-UniRule"/>
</dbReference>
<dbReference type="GO" id="GO:0004818">
    <property type="term" value="F:glutamate-tRNA ligase activity"/>
    <property type="evidence" value="ECO:0007669"/>
    <property type="project" value="UniProtKB-UniRule"/>
</dbReference>
<dbReference type="GO" id="GO:0000049">
    <property type="term" value="F:tRNA binding"/>
    <property type="evidence" value="ECO:0007669"/>
    <property type="project" value="InterPro"/>
</dbReference>
<dbReference type="GO" id="GO:0008270">
    <property type="term" value="F:zinc ion binding"/>
    <property type="evidence" value="ECO:0007669"/>
    <property type="project" value="InterPro"/>
</dbReference>
<dbReference type="GO" id="GO:0006424">
    <property type="term" value="P:glutamyl-tRNA aminoacylation"/>
    <property type="evidence" value="ECO:0007669"/>
    <property type="project" value="UniProtKB-UniRule"/>
</dbReference>
<dbReference type="CDD" id="cd00808">
    <property type="entry name" value="GluRS_core"/>
    <property type="match status" value="1"/>
</dbReference>
<dbReference type="FunFam" id="3.40.50.620:FF:000007">
    <property type="entry name" value="Glutamate--tRNA ligase"/>
    <property type="match status" value="1"/>
</dbReference>
<dbReference type="Gene3D" id="1.10.10.350">
    <property type="match status" value="1"/>
</dbReference>
<dbReference type="Gene3D" id="3.40.50.620">
    <property type="entry name" value="HUPs"/>
    <property type="match status" value="1"/>
</dbReference>
<dbReference type="HAMAP" id="MF_00022">
    <property type="entry name" value="Glu_tRNA_synth_type1"/>
    <property type="match status" value="1"/>
</dbReference>
<dbReference type="InterPro" id="IPR045462">
    <property type="entry name" value="aa-tRNA-synth_I_cd-bd"/>
</dbReference>
<dbReference type="InterPro" id="IPR020751">
    <property type="entry name" value="aa-tRNA-synth_I_codon-bd_sub2"/>
</dbReference>
<dbReference type="InterPro" id="IPR001412">
    <property type="entry name" value="aa-tRNA-synth_I_CS"/>
</dbReference>
<dbReference type="InterPro" id="IPR008925">
    <property type="entry name" value="aa_tRNA-synth_I_cd-bd_sf"/>
</dbReference>
<dbReference type="InterPro" id="IPR004527">
    <property type="entry name" value="Glu-tRNA-ligase_bac/mito"/>
</dbReference>
<dbReference type="InterPro" id="IPR000924">
    <property type="entry name" value="Glu/Gln-tRNA-synth"/>
</dbReference>
<dbReference type="InterPro" id="IPR020058">
    <property type="entry name" value="Glu/Gln-tRNA-synth_Ib_cat-dom"/>
</dbReference>
<dbReference type="InterPro" id="IPR049940">
    <property type="entry name" value="GluQ/Sye"/>
</dbReference>
<dbReference type="InterPro" id="IPR033910">
    <property type="entry name" value="GluRS_core"/>
</dbReference>
<dbReference type="InterPro" id="IPR014729">
    <property type="entry name" value="Rossmann-like_a/b/a_fold"/>
</dbReference>
<dbReference type="NCBIfam" id="TIGR00464">
    <property type="entry name" value="gltX_bact"/>
    <property type="match status" value="1"/>
</dbReference>
<dbReference type="PANTHER" id="PTHR43311">
    <property type="entry name" value="GLUTAMATE--TRNA LIGASE"/>
    <property type="match status" value="1"/>
</dbReference>
<dbReference type="PANTHER" id="PTHR43311:SF2">
    <property type="entry name" value="GLUTAMATE--TRNA LIGASE, MITOCHONDRIAL-RELATED"/>
    <property type="match status" value="1"/>
</dbReference>
<dbReference type="Pfam" id="PF19269">
    <property type="entry name" value="Anticodon_2"/>
    <property type="match status" value="1"/>
</dbReference>
<dbReference type="Pfam" id="PF00749">
    <property type="entry name" value="tRNA-synt_1c"/>
    <property type="match status" value="1"/>
</dbReference>
<dbReference type="PRINTS" id="PR00987">
    <property type="entry name" value="TRNASYNTHGLU"/>
</dbReference>
<dbReference type="SUPFAM" id="SSF48163">
    <property type="entry name" value="An anticodon-binding domain of class I aminoacyl-tRNA synthetases"/>
    <property type="match status" value="1"/>
</dbReference>
<dbReference type="SUPFAM" id="SSF52374">
    <property type="entry name" value="Nucleotidylyl transferase"/>
    <property type="match status" value="1"/>
</dbReference>
<dbReference type="PROSITE" id="PS00178">
    <property type="entry name" value="AA_TRNA_LIGASE_I"/>
    <property type="match status" value="1"/>
</dbReference>
<organism>
    <name type="scientific">Rhodopseudomonas palustris (strain BisB5)</name>
    <dbReference type="NCBI Taxonomy" id="316057"/>
    <lineage>
        <taxon>Bacteria</taxon>
        <taxon>Pseudomonadati</taxon>
        <taxon>Pseudomonadota</taxon>
        <taxon>Alphaproteobacteria</taxon>
        <taxon>Hyphomicrobiales</taxon>
        <taxon>Nitrobacteraceae</taxon>
        <taxon>Rhodopseudomonas</taxon>
    </lineage>
</organism>
<reference key="1">
    <citation type="submission" date="2006-03" db="EMBL/GenBank/DDBJ databases">
        <title>Complete sequence of Rhodopseudomonas palustris BisB5.</title>
        <authorList>
            <consortium name="US DOE Joint Genome Institute"/>
            <person name="Copeland A."/>
            <person name="Lucas S."/>
            <person name="Lapidus A."/>
            <person name="Barry K."/>
            <person name="Detter J.C."/>
            <person name="Glavina del Rio T."/>
            <person name="Hammon N."/>
            <person name="Israni S."/>
            <person name="Dalin E."/>
            <person name="Tice H."/>
            <person name="Pitluck S."/>
            <person name="Chain P."/>
            <person name="Malfatti S."/>
            <person name="Shin M."/>
            <person name="Vergez L."/>
            <person name="Schmutz J."/>
            <person name="Larimer F."/>
            <person name="Land M."/>
            <person name="Hauser L."/>
            <person name="Pelletier D.A."/>
            <person name="Kyrpides N."/>
            <person name="Lykidis A."/>
            <person name="Oda Y."/>
            <person name="Harwood C.S."/>
            <person name="Richardson P."/>
        </authorList>
    </citation>
    <scope>NUCLEOTIDE SEQUENCE [LARGE SCALE GENOMIC DNA]</scope>
    <source>
        <strain>BisB5</strain>
    </source>
</reference>
<accession>Q136B9</accession>
<protein>
    <recommendedName>
        <fullName evidence="1">Glutamate--tRNA ligase</fullName>
        <ecNumber evidence="1">6.1.1.17</ecNumber>
    </recommendedName>
    <alternativeName>
        <fullName evidence="1">Glutamyl-tRNA synthetase</fullName>
        <shortName evidence="1">GluRS</shortName>
    </alternativeName>
</protein>
<comment type="function">
    <text evidence="1">Catalyzes the attachment of glutamate to tRNA(Glu) in a two-step reaction: glutamate is first activated by ATP to form Glu-AMP and then transferred to the acceptor end of tRNA(Glu).</text>
</comment>
<comment type="catalytic activity">
    <reaction evidence="1">
        <text>tRNA(Glu) + L-glutamate + ATP = L-glutamyl-tRNA(Glu) + AMP + diphosphate</text>
        <dbReference type="Rhea" id="RHEA:23540"/>
        <dbReference type="Rhea" id="RHEA-COMP:9663"/>
        <dbReference type="Rhea" id="RHEA-COMP:9680"/>
        <dbReference type="ChEBI" id="CHEBI:29985"/>
        <dbReference type="ChEBI" id="CHEBI:30616"/>
        <dbReference type="ChEBI" id="CHEBI:33019"/>
        <dbReference type="ChEBI" id="CHEBI:78442"/>
        <dbReference type="ChEBI" id="CHEBI:78520"/>
        <dbReference type="ChEBI" id="CHEBI:456215"/>
        <dbReference type="EC" id="6.1.1.17"/>
    </reaction>
</comment>
<comment type="subunit">
    <text evidence="1">Monomer.</text>
</comment>
<comment type="subcellular location">
    <subcellularLocation>
        <location evidence="1">Cytoplasm</location>
    </subcellularLocation>
</comment>
<comment type="similarity">
    <text evidence="1">Belongs to the class-I aminoacyl-tRNA synthetase family. Glutamate--tRNA ligase type 1 subfamily.</text>
</comment>
<proteinExistence type="inferred from homology"/>